<keyword id="KW-0687">Ribonucleoprotein</keyword>
<keyword id="KW-0689">Ribosomal protein</keyword>
<keyword id="KW-0694">RNA-binding</keyword>
<keyword id="KW-0699">rRNA-binding</keyword>
<comment type="function">
    <text evidence="1">Binds 16S rRNA, required for the assembly of 30S particles and may also be responsible for determining the conformation of the 16S rRNA at the A site.</text>
</comment>
<comment type="subunit">
    <text evidence="1">Part of the 30S ribosomal subunit. Contacts proteins S3 and S10.</text>
</comment>
<comment type="similarity">
    <text evidence="1">Belongs to the universal ribosomal protein uS14 family.</text>
</comment>
<reference key="1">
    <citation type="submission" date="2007-09" db="EMBL/GenBank/DDBJ databases">
        <title>Complete genome sequence of Rickettsia rickettsii.</title>
        <authorList>
            <person name="Madan A."/>
            <person name="Fahey J."/>
            <person name="Helton E."/>
            <person name="Ketteman M."/>
            <person name="Madan A."/>
            <person name="Rodrigues S."/>
            <person name="Sanchez A."/>
            <person name="Dasch G."/>
            <person name="Eremeeva M."/>
        </authorList>
    </citation>
    <scope>NUCLEOTIDE SEQUENCE [LARGE SCALE GENOMIC DNA]</scope>
    <source>
        <strain>Sheila Smith</strain>
    </source>
</reference>
<proteinExistence type="inferred from homology"/>
<protein>
    <recommendedName>
        <fullName evidence="1">Small ribosomal subunit protein uS14</fullName>
    </recommendedName>
    <alternativeName>
        <fullName evidence="3">30S ribosomal protein S14</fullName>
    </alternativeName>
</protein>
<accession>A8GT56</accession>
<evidence type="ECO:0000255" key="1">
    <source>
        <dbReference type="HAMAP-Rule" id="MF_00537"/>
    </source>
</evidence>
<evidence type="ECO:0000256" key="2">
    <source>
        <dbReference type="SAM" id="MobiDB-lite"/>
    </source>
</evidence>
<evidence type="ECO:0000305" key="3"/>
<name>RS14_RICRS</name>
<dbReference type="EMBL" id="CP000848">
    <property type="protein sequence ID" value="ABV76581.1"/>
    <property type="molecule type" value="Genomic_DNA"/>
</dbReference>
<dbReference type="RefSeq" id="WP_008580947.1">
    <property type="nucleotide sequence ID" value="NZ_CP121767.1"/>
</dbReference>
<dbReference type="SMR" id="A8GT56"/>
<dbReference type="GeneID" id="928139"/>
<dbReference type="KEGG" id="rri:A1G_05490"/>
<dbReference type="HOGENOM" id="CLU_139869_0_1_5"/>
<dbReference type="Proteomes" id="UP000006832">
    <property type="component" value="Chromosome"/>
</dbReference>
<dbReference type="GO" id="GO:0005737">
    <property type="term" value="C:cytoplasm"/>
    <property type="evidence" value="ECO:0007669"/>
    <property type="project" value="UniProtKB-ARBA"/>
</dbReference>
<dbReference type="GO" id="GO:0015935">
    <property type="term" value="C:small ribosomal subunit"/>
    <property type="evidence" value="ECO:0007669"/>
    <property type="project" value="TreeGrafter"/>
</dbReference>
<dbReference type="GO" id="GO:0019843">
    <property type="term" value="F:rRNA binding"/>
    <property type="evidence" value="ECO:0007669"/>
    <property type="project" value="UniProtKB-UniRule"/>
</dbReference>
<dbReference type="GO" id="GO:0003735">
    <property type="term" value="F:structural constituent of ribosome"/>
    <property type="evidence" value="ECO:0007669"/>
    <property type="project" value="InterPro"/>
</dbReference>
<dbReference type="GO" id="GO:0006412">
    <property type="term" value="P:translation"/>
    <property type="evidence" value="ECO:0007669"/>
    <property type="project" value="UniProtKB-UniRule"/>
</dbReference>
<dbReference type="FunFam" id="1.10.287.1480:FF:000001">
    <property type="entry name" value="30S ribosomal protein S14"/>
    <property type="match status" value="1"/>
</dbReference>
<dbReference type="Gene3D" id="1.10.287.1480">
    <property type="match status" value="1"/>
</dbReference>
<dbReference type="HAMAP" id="MF_00537">
    <property type="entry name" value="Ribosomal_uS14_1"/>
    <property type="match status" value="1"/>
</dbReference>
<dbReference type="InterPro" id="IPR001209">
    <property type="entry name" value="Ribosomal_uS14"/>
</dbReference>
<dbReference type="InterPro" id="IPR023036">
    <property type="entry name" value="Ribosomal_uS14_bac/plastid"/>
</dbReference>
<dbReference type="InterPro" id="IPR018271">
    <property type="entry name" value="Ribosomal_uS14_CS"/>
</dbReference>
<dbReference type="NCBIfam" id="NF006477">
    <property type="entry name" value="PRK08881.1"/>
    <property type="match status" value="1"/>
</dbReference>
<dbReference type="PANTHER" id="PTHR19836">
    <property type="entry name" value="30S RIBOSOMAL PROTEIN S14"/>
    <property type="match status" value="1"/>
</dbReference>
<dbReference type="PANTHER" id="PTHR19836:SF19">
    <property type="entry name" value="SMALL RIBOSOMAL SUBUNIT PROTEIN US14M"/>
    <property type="match status" value="1"/>
</dbReference>
<dbReference type="Pfam" id="PF00253">
    <property type="entry name" value="Ribosomal_S14"/>
    <property type="match status" value="1"/>
</dbReference>
<dbReference type="SUPFAM" id="SSF57716">
    <property type="entry name" value="Glucocorticoid receptor-like (DNA-binding domain)"/>
    <property type="match status" value="1"/>
</dbReference>
<dbReference type="PROSITE" id="PS00527">
    <property type="entry name" value="RIBOSOMAL_S14"/>
    <property type="match status" value="1"/>
</dbReference>
<organism>
    <name type="scientific">Rickettsia rickettsii (strain Sheila Smith)</name>
    <dbReference type="NCBI Taxonomy" id="392021"/>
    <lineage>
        <taxon>Bacteria</taxon>
        <taxon>Pseudomonadati</taxon>
        <taxon>Pseudomonadota</taxon>
        <taxon>Alphaproteobacteria</taxon>
        <taxon>Rickettsiales</taxon>
        <taxon>Rickettsiaceae</taxon>
        <taxon>Rickettsieae</taxon>
        <taxon>Rickettsia</taxon>
        <taxon>spotted fever group</taxon>
    </lineage>
</organism>
<sequence>MAKVSSIKKNESRKKKSQSLHNKRLALKSKIYDKNISLEERFSLVMSLAQLPRNSSSTRIRNRCELTGRPRGVTRKFGISRNKLRELIGRGLVPGVVKSSW</sequence>
<feature type="chain" id="PRO_1000128550" description="Small ribosomal subunit protein uS14">
    <location>
        <begin position="1"/>
        <end position="101"/>
    </location>
</feature>
<feature type="region of interest" description="Disordered" evidence="2">
    <location>
        <begin position="1"/>
        <end position="22"/>
    </location>
</feature>
<feature type="compositionally biased region" description="Basic residues" evidence="2">
    <location>
        <begin position="11"/>
        <end position="22"/>
    </location>
</feature>
<gene>
    <name evidence="1" type="primary">rpsN</name>
    <name type="ordered locus">A1G_05490</name>
</gene>